<dbReference type="EC" id="2.7.1.89" evidence="1"/>
<dbReference type="EMBL" id="CP001396">
    <property type="protein sequence ID" value="ACR65634.1"/>
    <property type="molecule type" value="Genomic_DNA"/>
</dbReference>
<dbReference type="RefSeq" id="WP_001116592.1">
    <property type="nucleotide sequence ID" value="NC_012759.1"/>
</dbReference>
<dbReference type="SMR" id="C4ZS46"/>
<dbReference type="GeneID" id="75203692"/>
<dbReference type="KEGG" id="ebw:BWG_0954"/>
<dbReference type="HOGENOM" id="CLU_055115_2_1_6"/>
<dbReference type="UniPathway" id="UPA00060">
    <property type="reaction ID" value="UER00596"/>
</dbReference>
<dbReference type="GO" id="GO:0005524">
    <property type="term" value="F:ATP binding"/>
    <property type="evidence" value="ECO:0007669"/>
    <property type="project" value="UniProtKB-KW"/>
</dbReference>
<dbReference type="GO" id="GO:0019165">
    <property type="term" value="F:thiamine kinase activity"/>
    <property type="evidence" value="ECO:0007669"/>
    <property type="project" value="UniProtKB-UniRule"/>
</dbReference>
<dbReference type="GO" id="GO:0009229">
    <property type="term" value="P:thiamine diphosphate biosynthetic process"/>
    <property type="evidence" value="ECO:0007669"/>
    <property type="project" value="UniProtKB-UniRule"/>
</dbReference>
<dbReference type="GO" id="GO:0006772">
    <property type="term" value="P:thiamine metabolic process"/>
    <property type="evidence" value="ECO:0007669"/>
    <property type="project" value="InterPro"/>
</dbReference>
<dbReference type="FunFam" id="3.90.1200.10:FF:000004">
    <property type="entry name" value="Thiamine kinase"/>
    <property type="match status" value="1"/>
</dbReference>
<dbReference type="Gene3D" id="3.90.1200.10">
    <property type="match status" value="1"/>
</dbReference>
<dbReference type="HAMAP" id="MF_01604">
    <property type="entry name" value="Thiamine_kinase"/>
    <property type="match status" value="1"/>
</dbReference>
<dbReference type="InterPro" id="IPR002575">
    <property type="entry name" value="Aminoglycoside_PTrfase"/>
</dbReference>
<dbReference type="InterPro" id="IPR011009">
    <property type="entry name" value="Kinase-like_dom_sf"/>
</dbReference>
<dbReference type="InterPro" id="IPR014093">
    <property type="entry name" value="Thiamine_kinase"/>
</dbReference>
<dbReference type="NCBIfam" id="NF007620">
    <property type="entry name" value="PRK10271.1"/>
    <property type="match status" value="1"/>
</dbReference>
<dbReference type="NCBIfam" id="TIGR02721">
    <property type="entry name" value="ycfN_thiK"/>
    <property type="match status" value="1"/>
</dbReference>
<dbReference type="Pfam" id="PF01636">
    <property type="entry name" value="APH"/>
    <property type="match status" value="1"/>
</dbReference>
<dbReference type="SUPFAM" id="SSF56112">
    <property type="entry name" value="Protein kinase-like (PK-like)"/>
    <property type="match status" value="1"/>
</dbReference>
<gene>
    <name evidence="1" type="primary">thiK</name>
    <name type="ordered locus">BWG_0954</name>
</gene>
<keyword id="KW-0067">ATP-binding</keyword>
<keyword id="KW-0418">Kinase</keyword>
<keyword id="KW-0547">Nucleotide-binding</keyword>
<keyword id="KW-0808">Transferase</keyword>
<organism>
    <name type="scientific">Escherichia coli (strain K12 / MC4100 / BW2952)</name>
    <dbReference type="NCBI Taxonomy" id="595496"/>
    <lineage>
        <taxon>Bacteria</taxon>
        <taxon>Pseudomonadati</taxon>
        <taxon>Pseudomonadota</taxon>
        <taxon>Gammaproteobacteria</taxon>
        <taxon>Enterobacterales</taxon>
        <taxon>Enterobacteriaceae</taxon>
        <taxon>Escherichia</taxon>
    </lineage>
</organism>
<evidence type="ECO:0000255" key="1">
    <source>
        <dbReference type="HAMAP-Rule" id="MF_01604"/>
    </source>
</evidence>
<protein>
    <recommendedName>
        <fullName evidence="1">Thiamine kinase</fullName>
        <ecNumber evidence="1">2.7.1.89</ecNumber>
    </recommendedName>
</protein>
<name>THIK_ECOBW</name>
<accession>C4ZS46</accession>
<comment type="function">
    <text evidence="1">Catalyzes the ATP-dependent phosphorylation of thiamine to thiamine phosphate. Is involved in thiamine salvage.</text>
</comment>
<comment type="catalytic activity">
    <reaction evidence="1">
        <text>thiamine + ATP = thiamine phosphate + ADP + H(+)</text>
        <dbReference type="Rhea" id="RHEA:12012"/>
        <dbReference type="ChEBI" id="CHEBI:15378"/>
        <dbReference type="ChEBI" id="CHEBI:18385"/>
        <dbReference type="ChEBI" id="CHEBI:30616"/>
        <dbReference type="ChEBI" id="CHEBI:37575"/>
        <dbReference type="ChEBI" id="CHEBI:456216"/>
        <dbReference type="EC" id="2.7.1.89"/>
    </reaction>
    <physiologicalReaction direction="left-to-right" evidence="1">
        <dbReference type="Rhea" id="RHEA:12013"/>
    </physiologicalReaction>
</comment>
<comment type="pathway">
    <text evidence="1">Cofactor biosynthesis; thiamine diphosphate biosynthesis; thiamine phosphate from thiamine: step 1/1.</text>
</comment>
<comment type="similarity">
    <text evidence="1">Belongs to the thiamine kinase family.</text>
</comment>
<reference key="1">
    <citation type="journal article" date="2009" name="J. Bacteriol.">
        <title>Genomic sequencing reveals regulatory mutations and recombinational events in the widely used MC4100 lineage of Escherichia coli K-12.</title>
        <authorList>
            <person name="Ferenci T."/>
            <person name="Zhou Z."/>
            <person name="Betteridge T."/>
            <person name="Ren Y."/>
            <person name="Liu Y."/>
            <person name="Feng L."/>
            <person name="Reeves P.R."/>
            <person name="Wang L."/>
        </authorList>
    </citation>
    <scope>NUCLEOTIDE SEQUENCE [LARGE SCALE GENOMIC DNA]</scope>
    <source>
        <strain>K12 / MC4100 / BW2952</strain>
    </source>
</reference>
<feature type="chain" id="PRO_1000215696" description="Thiamine kinase">
    <location>
        <begin position="1"/>
        <end position="274"/>
    </location>
</feature>
<proteinExistence type="inferred from homology"/>
<sequence length="274" mass="32397">MPFRSNNPITRDELLSRFFPQYHPVTTFNSGLSGGSFLIEHQGQRFVVRQPHDPDAPQSAFLRQYRALSQLPACIAPKPHLYLRDWMVVDYLPGAVKTYLPDTNELAGLLYYLHQQPRFGWRITLLPLLELYWQQSDPARRTVGWLRMLKRLRKAREPRPLRLSPLHMDVHAGNLVHSASGLKLIDWEYAGDGDIALELAAVWVENTEQHRQLVNDYATRAKIYPAQLWRQVRRWFPWLLMLKAGWFEYRWRQTGDQQFIRLADDTWRQLLIKQ</sequence>